<sequence length="223" mass="25706">MNIIIFSLMTISFLRARFGYEKEILPMMDTASDKSYLQGPPNPYTATVNPLERLISDTYLKVTGILSHYFAYYQENVAEFRRWFQSIYYEMDDDTRKKILNELNLNLRSMDDLENFWTETQGAILKGNLLELSDLLKGLEEAVNAKTHMSSEANNDLIKSKINFKDKAVDFLNQLNKIYGFLDLGLSYHTSNRFTDVHAMFLDAAASKKKLDKSFESISGIDD</sequence>
<protein>
    <recommendedName>
        <fullName>Spore wall protein 26</fullName>
    </recommendedName>
</protein>
<evidence type="ECO:0000255" key="1"/>
<evidence type="ECO:0000269" key="2">
    <source>
    </source>
</evidence>
<evidence type="ECO:0000305" key="3"/>
<dbReference type="EMBL" id="EU677842">
    <property type="protein sequence ID" value="ACG56269.1"/>
    <property type="molecule type" value="Genomic_DNA"/>
</dbReference>
<dbReference type="EMBL" id="KB908968">
    <property type="protein sequence ID" value="EOB13745.1"/>
    <property type="molecule type" value="Genomic_DNA"/>
</dbReference>
<dbReference type="EnsemblFungi" id="EOB13745">
    <property type="protein sequence ID" value="EOB13745"/>
    <property type="gene ID" value="NBO_60g0001"/>
</dbReference>
<dbReference type="VEuPathDB" id="MicrosporidiaDB:NBO_60g0001"/>
<dbReference type="HOGENOM" id="CLU_1240447_0_0_1"/>
<dbReference type="OMA" id="LENFWTE"/>
<dbReference type="OrthoDB" id="2199738at2759"/>
<dbReference type="Proteomes" id="UP000016927">
    <property type="component" value="Unassembled WGS sequence"/>
</dbReference>
<dbReference type="GO" id="GO:0031160">
    <property type="term" value="C:spore wall"/>
    <property type="evidence" value="ECO:0007669"/>
    <property type="project" value="UniProtKB-SubCell"/>
</dbReference>
<dbReference type="GO" id="GO:0007155">
    <property type="term" value="P:cell adhesion"/>
    <property type="evidence" value="ECO:0007669"/>
    <property type="project" value="UniProtKB-KW"/>
</dbReference>
<dbReference type="GO" id="GO:0030435">
    <property type="term" value="P:sporulation resulting in formation of a cellular spore"/>
    <property type="evidence" value="ECO:0007669"/>
    <property type="project" value="UniProtKB-KW"/>
</dbReference>
<comment type="function">
    <text evidence="2">Spore wall protein involved in the adhesion to host cells surface. Microsporidian spore adherence is an integral part of activation and host cell invasion which requires the extrusion at the spore apex of a very long and coiled structure, the polar tube, through which the sporoplasm is pushed to enter into the potential host cell.</text>
</comment>
<comment type="subcellular location">
    <subcellularLocation>
        <location evidence="2">Spore core</location>
    </subcellularLocation>
    <subcellularLocation>
        <location evidence="2">Spore wall</location>
    </subcellularLocation>
    <subcellularLocation>
        <location evidence="2">Spore</location>
        <location evidence="2">Perispore</location>
    </subcellularLocation>
</comment>
<comment type="developmental stage">
    <text evidence="2">Synthesized during sporogony.</text>
</comment>
<comment type="domain">
    <text evidence="2">Heparin-binding motifs (HBMs) are characterized by an XBBXBX or XBBBXXBX sequence, where X is any neutral amino acid and B is a positively charged basic amino acid, and are defined as the consensus sequence necessary for protein-heparin interactions. The HBM motif is involved in spore adherence to host cells.</text>
</comment>
<organism>
    <name type="scientific">Nosema bombycis (strain CQ1 / CVCC 102059)</name>
    <name type="common">Microsporidian parasite</name>
    <name type="synonym">Pebrine of silkworm</name>
    <dbReference type="NCBI Taxonomy" id="578461"/>
    <lineage>
        <taxon>Eukaryota</taxon>
        <taxon>Fungi</taxon>
        <taxon>Fungi incertae sedis</taxon>
        <taxon>Microsporidia</taxon>
        <taxon>Nosematidae</taxon>
        <taxon>Nosema</taxon>
    </lineage>
</organism>
<feature type="signal peptide" evidence="1">
    <location>
        <begin position="1"/>
        <end position="16"/>
    </location>
</feature>
<feature type="chain" id="PRO_0000385181" description="Spore wall protein 26">
    <location>
        <begin position="17"/>
        <end position="223"/>
    </location>
</feature>
<feature type="short sequence motif" description="HBM">
    <location>
        <begin position="207"/>
        <end position="214"/>
    </location>
</feature>
<feature type="sequence conflict" description="In Ref. 1; ACG56269." evidence="3" ref="1">
    <original>A</original>
    <variation>T</variation>
    <location>
        <position position="142"/>
    </location>
</feature>
<keyword id="KW-0130">Cell adhesion</keyword>
<keyword id="KW-1185">Reference proteome</keyword>
<keyword id="KW-0732">Signal</keyword>
<keyword id="KW-0749">Sporulation</keyword>
<gene>
    <name type="primary">SWP26</name>
    <name type="ORF">NBO_60g0001</name>
</gene>
<name>SWP26_NOSB1</name>
<proteinExistence type="evidence at protein level"/>
<accession>B9UJ97</accession>
<accession>R0MHW8</accession>
<reference key="1">
    <citation type="journal article" date="2009" name="Int. J. Parasitol.">
        <title>Identification of a novel spore wall protein (SWP26) from microsporidia Nosema bombycis.</title>
        <authorList>
            <person name="Li Y."/>
            <person name="Wu Z."/>
            <person name="Pan G."/>
            <person name="He W."/>
            <person name="Zhang R."/>
            <person name="Hu J."/>
            <person name="Zhou Z."/>
        </authorList>
    </citation>
    <scope>NUCLEOTIDE SEQUENCE [GENOMIC DNA]</scope>
    <scope>IDENTIFICATION BY MASS SPECTROMETRY</scope>
    <scope>FUNCTION</scope>
    <scope>DOMAIN</scope>
    <scope>SUBCELLULAR LOCATION</scope>
    <scope>DEVELOPMENTAL STAGE</scope>
    <source>
        <strain>CQ1 / CVCC 102059</strain>
    </source>
</reference>
<reference key="2">
    <citation type="journal article" date="2013" name="BMC Genomics">
        <title>Comparative genomics of parasitic silkworm microsporidia reveal an association between genome expansion and host adaptation.</title>
        <authorList>
            <person name="Pan G."/>
            <person name="Xu J."/>
            <person name="Li T."/>
            <person name="Xia Q."/>
            <person name="Liu S.L."/>
            <person name="Zhang G."/>
            <person name="Li S."/>
            <person name="Li C."/>
            <person name="Liu H."/>
            <person name="Yang L."/>
            <person name="Liu T."/>
            <person name="Zhang X."/>
            <person name="Wu Z."/>
            <person name="Fan W."/>
            <person name="Dang X."/>
            <person name="Xiang H."/>
            <person name="Tao M."/>
            <person name="Li Y."/>
            <person name="Hu J."/>
            <person name="Li Z."/>
            <person name="Lin L."/>
            <person name="Luo J."/>
            <person name="Geng L."/>
            <person name="Wang L."/>
            <person name="Long M."/>
            <person name="Wan Y."/>
            <person name="He N."/>
            <person name="Zhang Z."/>
            <person name="Lu C."/>
            <person name="Keeling P.J."/>
            <person name="Wang J."/>
            <person name="Xiang Z."/>
            <person name="Zhou Z."/>
        </authorList>
    </citation>
    <scope>NUCLEOTIDE SEQUENCE [LARGE SCALE GENOMIC DNA]</scope>
    <source>
        <strain>CQ1 / CVCC 102059</strain>
    </source>
</reference>